<comment type="function">
    <text evidence="1">With S4 and S12 plays an important role in translational accuracy.</text>
</comment>
<comment type="function">
    <text evidence="1">Located at the back of the 30S subunit body where it stabilizes the conformation of the head with respect to the body.</text>
</comment>
<comment type="subunit">
    <text evidence="1">Part of the 30S ribosomal subunit. Contacts proteins S4 and S8.</text>
</comment>
<comment type="domain">
    <text>The N-terminal domain interacts with the head of the 30S subunit; the C-terminal domain interacts with the body and contacts protein S4. The interaction surface between S4 and S5 is involved in control of translational fidelity.</text>
</comment>
<comment type="similarity">
    <text evidence="1">Belongs to the universal ribosomal protein uS5 family.</text>
</comment>
<feature type="chain" id="PRO_0000131489" description="Small ribosomal subunit protein uS5">
    <location>
        <begin position="1"/>
        <end position="172"/>
    </location>
</feature>
<feature type="domain" description="S5 DRBM" evidence="1">
    <location>
        <begin position="17"/>
        <end position="80"/>
    </location>
</feature>
<name>RS5_BURMA</name>
<reference key="1">
    <citation type="journal article" date="2004" name="Proc. Natl. Acad. Sci. U.S.A.">
        <title>Structural flexibility in the Burkholderia mallei genome.</title>
        <authorList>
            <person name="Nierman W.C."/>
            <person name="DeShazer D."/>
            <person name="Kim H.S."/>
            <person name="Tettelin H."/>
            <person name="Nelson K.E."/>
            <person name="Feldblyum T.V."/>
            <person name="Ulrich R.L."/>
            <person name="Ronning C.M."/>
            <person name="Brinkac L.M."/>
            <person name="Daugherty S.C."/>
            <person name="Davidsen T.D."/>
            <person name="DeBoy R.T."/>
            <person name="Dimitrov G."/>
            <person name="Dodson R.J."/>
            <person name="Durkin A.S."/>
            <person name="Gwinn M.L."/>
            <person name="Haft D.H."/>
            <person name="Khouri H.M."/>
            <person name="Kolonay J.F."/>
            <person name="Madupu R."/>
            <person name="Mohammoud Y."/>
            <person name="Nelson W.C."/>
            <person name="Radune D."/>
            <person name="Romero C.M."/>
            <person name="Sarria S."/>
            <person name="Selengut J."/>
            <person name="Shamblin C."/>
            <person name="Sullivan S.A."/>
            <person name="White O."/>
            <person name="Yu Y."/>
            <person name="Zafar N."/>
            <person name="Zhou L."/>
            <person name="Fraser C.M."/>
        </authorList>
    </citation>
    <scope>NUCLEOTIDE SEQUENCE [LARGE SCALE GENOMIC DNA]</scope>
    <source>
        <strain>ATCC 23344</strain>
    </source>
</reference>
<dbReference type="EMBL" id="CP000010">
    <property type="protein sequence ID" value="AAU47853.1"/>
    <property type="molecule type" value="Genomic_DNA"/>
</dbReference>
<dbReference type="RefSeq" id="WP_004197945.1">
    <property type="nucleotide sequence ID" value="NC_006348.1"/>
</dbReference>
<dbReference type="RefSeq" id="YP_104149.1">
    <property type="nucleotide sequence ID" value="NC_006348.1"/>
</dbReference>
<dbReference type="SMR" id="Q62GM2"/>
<dbReference type="GeneID" id="93126536"/>
<dbReference type="KEGG" id="bma:BMA2615"/>
<dbReference type="PATRIC" id="fig|243160.12.peg.2686"/>
<dbReference type="eggNOG" id="COG0098">
    <property type="taxonomic scope" value="Bacteria"/>
</dbReference>
<dbReference type="HOGENOM" id="CLU_065898_2_2_4"/>
<dbReference type="PRO" id="PR:Q62GM2"/>
<dbReference type="Proteomes" id="UP000006693">
    <property type="component" value="Chromosome 1"/>
</dbReference>
<dbReference type="GO" id="GO:0015935">
    <property type="term" value="C:small ribosomal subunit"/>
    <property type="evidence" value="ECO:0007669"/>
    <property type="project" value="InterPro"/>
</dbReference>
<dbReference type="GO" id="GO:0019843">
    <property type="term" value="F:rRNA binding"/>
    <property type="evidence" value="ECO:0007669"/>
    <property type="project" value="UniProtKB-UniRule"/>
</dbReference>
<dbReference type="GO" id="GO:0003735">
    <property type="term" value="F:structural constituent of ribosome"/>
    <property type="evidence" value="ECO:0007669"/>
    <property type="project" value="InterPro"/>
</dbReference>
<dbReference type="GO" id="GO:0006412">
    <property type="term" value="P:translation"/>
    <property type="evidence" value="ECO:0007669"/>
    <property type="project" value="UniProtKB-UniRule"/>
</dbReference>
<dbReference type="FunFam" id="3.30.160.20:FF:000001">
    <property type="entry name" value="30S ribosomal protein S5"/>
    <property type="match status" value="1"/>
</dbReference>
<dbReference type="FunFam" id="3.30.230.10:FF:000002">
    <property type="entry name" value="30S ribosomal protein S5"/>
    <property type="match status" value="1"/>
</dbReference>
<dbReference type="Gene3D" id="3.30.160.20">
    <property type="match status" value="1"/>
</dbReference>
<dbReference type="Gene3D" id="3.30.230.10">
    <property type="match status" value="1"/>
</dbReference>
<dbReference type="HAMAP" id="MF_01307_B">
    <property type="entry name" value="Ribosomal_uS5_B"/>
    <property type="match status" value="1"/>
</dbReference>
<dbReference type="InterPro" id="IPR020568">
    <property type="entry name" value="Ribosomal_Su5_D2-typ_SF"/>
</dbReference>
<dbReference type="InterPro" id="IPR000851">
    <property type="entry name" value="Ribosomal_uS5"/>
</dbReference>
<dbReference type="InterPro" id="IPR005712">
    <property type="entry name" value="Ribosomal_uS5_bac-type"/>
</dbReference>
<dbReference type="InterPro" id="IPR005324">
    <property type="entry name" value="Ribosomal_uS5_C"/>
</dbReference>
<dbReference type="InterPro" id="IPR013810">
    <property type="entry name" value="Ribosomal_uS5_N"/>
</dbReference>
<dbReference type="InterPro" id="IPR018192">
    <property type="entry name" value="Ribosomal_uS5_N_CS"/>
</dbReference>
<dbReference type="InterPro" id="IPR014721">
    <property type="entry name" value="Ribsml_uS5_D2-typ_fold_subgr"/>
</dbReference>
<dbReference type="NCBIfam" id="TIGR01021">
    <property type="entry name" value="rpsE_bact"/>
    <property type="match status" value="1"/>
</dbReference>
<dbReference type="PANTHER" id="PTHR48277">
    <property type="entry name" value="MITOCHONDRIAL RIBOSOMAL PROTEIN S5"/>
    <property type="match status" value="1"/>
</dbReference>
<dbReference type="PANTHER" id="PTHR48277:SF1">
    <property type="entry name" value="MITOCHONDRIAL RIBOSOMAL PROTEIN S5"/>
    <property type="match status" value="1"/>
</dbReference>
<dbReference type="Pfam" id="PF00333">
    <property type="entry name" value="Ribosomal_S5"/>
    <property type="match status" value="1"/>
</dbReference>
<dbReference type="Pfam" id="PF03719">
    <property type="entry name" value="Ribosomal_S5_C"/>
    <property type="match status" value="1"/>
</dbReference>
<dbReference type="SUPFAM" id="SSF54768">
    <property type="entry name" value="dsRNA-binding domain-like"/>
    <property type="match status" value="1"/>
</dbReference>
<dbReference type="SUPFAM" id="SSF54211">
    <property type="entry name" value="Ribosomal protein S5 domain 2-like"/>
    <property type="match status" value="1"/>
</dbReference>
<dbReference type="PROSITE" id="PS00585">
    <property type="entry name" value="RIBOSOMAL_S5"/>
    <property type="match status" value="1"/>
</dbReference>
<dbReference type="PROSITE" id="PS50881">
    <property type="entry name" value="S5_DSRBD"/>
    <property type="match status" value="1"/>
</dbReference>
<evidence type="ECO:0000255" key="1">
    <source>
        <dbReference type="HAMAP-Rule" id="MF_01307"/>
    </source>
</evidence>
<evidence type="ECO:0000305" key="2"/>
<organism>
    <name type="scientific">Burkholderia mallei (strain ATCC 23344)</name>
    <dbReference type="NCBI Taxonomy" id="243160"/>
    <lineage>
        <taxon>Bacteria</taxon>
        <taxon>Pseudomonadati</taxon>
        <taxon>Pseudomonadota</taxon>
        <taxon>Betaproteobacteria</taxon>
        <taxon>Burkholderiales</taxon>
        <taxon>Burkholderiaceae</taxon>
        <taxon>Burkholderia</taxon>
        <taxon>pseudomallei group</taxon>
    </lineage>
</organism>
<accession>Q62GM2</accession>
<proteinExistence type="inferred from homology"/>
<protein>
    <recommendedName>
        <fullName evidence="1">Small ribosomal subunit protein uS5</fullName>
    </recommendedName>
    <alternativeName>
        <fullName evidence="2">30S ribosomal protein S5</fullName>
    </alternativeName>
</protein>
<sequence length="172" mass="18150">MAKMQAKVQADERDDGLREKMISVNRVTKVVKGGRILGFAALTVVGDGDGRVGMGKGKAKEVPVAVQKAMEQARRNMFKVPLKNGTLQHEVHGKHGASTVLLAPAKDGTGVIAGGPMRAVFDVMGVQNVVAKSHGSTNPYNLVRATLDGLRKQSTPADIAAKRGKSVEEILG</sequence>
<gene>
    <name evidence="1" type="primary">rpsE</name>
    <name type="ordered locus">BMA2615</name>
</gene>
<keyword id="KW-1185">Reference proteome</keyword>
<keyword id="KW-0687">Ribonucleoprotein</keyword>
<keyword id="KW-0689">Ribosomal protein</keyword>
<keyword id="KW-0694">RNA-binding</keyword>
<keyword id="KW-0699">rRNA-binding</keyword>